<evidence type="ECO:0000305" key="1"/>
<dbReference type="GO" id="GO:0030246">
    <property type="term" value="F:carbohydrate binding"/>
    <property type="evidence" value="ECO:0000314"/>
    <property type="project" value="UniProtKB"/>
</dbReference>
<dbReference type="GO" id="GO:0005537">
    <property type="term" value="F:D-mannose binding"/>
    <property type="evidence" value="ECO:0007669"/>
    <property type="project" value="UniProtKB-KW"/>
</dbReference>
<dbReference type="Gene3D" id="2.60.40.4220">
    <property type="match status" value="1"/>
</dbReference>
<dbReference type="InterPro" id="IPR013320">
    <property type="entry name" value="ConA-like_dom_sf"/>
</dbReference>
<dbReference type="InterPro" id="IPR019825">
    <property type="entry name" value="Lectin_legB_Mn/Ca_BS"/>
</dbReference>
<dbReference type="InterPro" id="IPR053761">
    <property type="entry name" value="Leguminous_Lectin_Domain_sf"/>
</dbReference>
<dbReference type="SUPFAM" id="SSF49899">
    <property type="entry name" value="Concanavalin A-like lectins/glucanases"/>
    <property type="match status" value="1"/>
</dbReference>
<dbReference type="PROSITE" id="PS00307">
    <property type="entry name" value="LECTIN_LEGUME_BETA"/>
    <property type="match status" value="1"/>
</dbReference>
<organism>
    <name type="scientific">Dioclea violacea</name>
    <dbReference type="NCBI Taxonomy" id="192415"/>
    <lineage>
        <taxon>Eukaryota</taxon>
        <taxon>Viridiplantae</taxon>
        <taxon>Streptophyta</taxon>
        <taxon>Embryophyta</taxon>
        <taxon>Tracheophyta</taxon>
        <taxon>Spermatophyta</taxon>
        <taxon>Magnoliopsida</taxon>
        <taxon>eudicotyledons</taxon>
        <taxon>Gunneridae</taxon>
        <taxon>Pentapetalae</taxon>
        <taxon>rosids</taxon>
        <taxon>fabids</taxon>
        <taxon>Fabales</taxon>
        <taxon>Fabaceae</taxon>
        <taxon>Papilionoideae</taxon>
        <taxon>50 kb inversion clade</taxon>
        <taxon>NPAAA clade</taxon>
        <taxon>indigoferoid/millettioid clade</taxon>
        <taxon>Phaseoleae</taxon>
        <taxon>Macropsychanthus</taxon>
    </lineage>
</organism>
<accession>P58909</accession>
<feature type="chain" id="PRO_0000017608" description="Lectin alpha chain">
    <location>
        <begin position="1"/>
        <end position="49" status="greater than"/>
    </location>
</feature>
<feature type="chain" id="PRO_0000017609" description="Lectin beta chain">
    <location>
        <begin position="1"/>
        <end position="25" status="greater than"/>
    </location>
</feature>
<feature type="chain" id="PRO_0000017610" description="Lectin gamma chain">
    <location>
        <begin position="26"/>
        <end position="49" status="greater than"/>
    </location>
</feature>
<feature type="non-consecutive residues" evidence="1">
    <location>
        <begin position="25"/>
        <end position="26"/>
    </location>
</feature>
<feature type="non-terminal residue">
    <location>
        <position position="49"/>
    </location>
</feature>
<reference key="1">
    <citation type="journal article" date="1999" name="Biochim. Biophys. Acta">
        <title>Molecular characterization and crystallization of Diocleinae lectins.</title>
        <authorList>
            <person name="Calvete J.J."/>
            <person name="Thole H.H."/>
            <person name="Raida M."/>
            <person name="Urbanke C."/>
            <person name="Romero A."/>
            <person name="Grangeiro T.B."/>
            <person name="Ramos M.V."/>
            <person name="Almeida da Rocha I.M."/>
            <person name="Guimaraes F.N."/>
            <person name="Cavada B.S."/>
        </authorList>
    </citation>
    <scope>PROTEIN SEQUENCE</scope>
    <scope>IDENTIFICATION BY MASS SPECTROMETRY</scope>
    <source>
        <tissue>Seed</tissue>
    </source>
</reference>
<proteinExistence type="evidence at protein level"/>
<protein>
    <recommendedName>
        <fullName>Lectin alpha chain</fullName>
    </recommendedName>
    <component>
        <recommendedName>
            <fullName>Lectin beta chain</fullName>
        </recommendedName>
    </component>
    <component>
        <recommendedName>
            <fullName>Lectin gamma chain</fullName>
        </recommendedName>
    </component>
</protein>
<keyword id="KW-0106">Calcium</keyword>
<keyword id="KW-0903">Direct protein sequencing</keyword>
<keyword id="KW-0430">Lectin</keyword>
<keyword id="KW-0464">Manganese</keyword>
<keyword id="KW-0465">Mannose-binding</keyword>
<name>LECA_DIOVO</name>
<sequence>ADTIVAVELDSYPNTDIGDPNYPHISIADENSLHFSFHKFSQNPKDLIL</sequence>
<comment type="function">
    <text>D-mannose/D-glucose-binding lectin.</text>
</comment>
<comment type="subunit">
    <text>Homotetramer.</text>
</comment>
<comment type="tissue specificity">
    <text>Seed.</text>
</comment>
<comment type="PTM">
    <text>The beta and gamma chains are produced by partial proteolytic processing of the lectin alpha chain by an asparaginyl endopeptidase. Mixture of 60% alpha lectin and 40% of its beta and gamma proteolytic fragments.</text>
</comment>
<comment type="miscellaneous">
    <text>Binds one manganese (or another transition metal) ion and one calcium ion. The metal ions are essential for the saccharide-binding and cell-agglutinating activities.</text>
</comment>
<comment type="similarity">
    <text evidence="1">Belongs to the leguminous lectin family.</text>
</comment>